<comment type="catalytic activity">
    <reaction evidence="1">
        <text>(2R)-3-phosphoglycerate + ATP = (2R)-3-phospho-glyceroyl phosphate + ADP</text>
        <dbReference type="Rhea" id="RHEA:14801"/>
        <dbReference type="ChEBI" id="CHEBI:30616"/>
        <dbReference type="ChEBI" id="CHEBI:57604"/>
        <dbReference type="ChEBI" id="CHEBI:58272"/>
        <dbReference type="ChEBI" id="CHEBI:456216"/>
        <dbReference type="EC" id="2.7.2.3"/>
    </reaction>
</comment>
<comment type="pathway">
    <text evidence="1">Carbohydrate degradation; glycolysis; pyruvate from D-glyceraldehyde 3-phosphate: step 2/5.</text>
</comment>
<comment type="subunit">
    <text evidence="1">Monomer.</text>
</comment>
<comment type="subcellular location">
    <subcellularLocation>
        <location evidence="1">Cytoplasm</location>
    </subcellularLocation>
</comment>
<comment type="similarity">
    <text evidence="1">Belongs to the phosphoglycerate kinase family.</text>
</comment>
<reference key="1">
    <citation type="submission" date="2007-08" db="EMBL/GenBank/DDBJ databases">
        <authorList>
            <consortium name="The Vibrio harveyi Genome Sequencing Project"/>
            <person name="Bassler B."/>
            <person name="Clifton S.W."/>
            <person name="Fulton L."/>
            <person name="Delehaunty K."/>
            <person name="Fronick C."/>
            <person name="Harrison M."/>
            <person name="Markivic C."/>
            <person name="Fulton R."/>
            <person name="Tin-Wollam A.-M."/>
            <person name="Shah N."/>
            <person name="Pepin K."/>
            <person name="Nash W."/>
            <person name="Thiruvilangam P."/>
            <person name="Bhonagiri V."/>
            <person name="Waters C."/>
            <person name="Tu K.C."/>
            <person name="Irgon J."/>
            <person name="Wilson R.K."/>
        </authorList>
    </citation>
    <scope>NUCLEOTIDE SEQUENCE [LARGE SCALE GENOMIC DNA]</scope>
    <source>
        <strain>ATCC BAA-1116 / BB120</strain>
    </source>
</reference>
<keyword id="KW-0067">ATP-binding</keyword>
<keyword id="KW-0963">Cytoplasm</keyword>
<keyword id="KW-0324">Glycolysis</keyword>
<keyword id="KW-0418">Kinase</keyword>
<keyword id="KW-0547">Nucleotide-binding</keyword>
<keyword id="KW-0808">Transferase</keyword>
<evidence type="ECO:0000255" key="1">
    <source>
        <dbReference type="HAMAP-Rule" id="MF_00145"/>
    </source>
</evidence>
<sequence>MSVIKMTDLDLAGKRVFIRADLNVPVKDGKVTSDARIIASLPTIKHCLEAGAKVMVTSHLGRPTEGEYAEEFSLQPVVNYLNDALDCEVKLAKDYLNGLELNAGELVVLENVRFNKGEKKNEEELSKQYASLCDIFVMDAFGTAHRAQASTHGVGMHADVACAGPLLANELEALGKAMDKPARPMVAIVGGSKVSTKLTVLESLSKIADQLVVGGGIANTFIAAAGHNVGKSLYEADLVETAKKLMDECAIPVATDVACAKAFDENAEAEIKHVSEVQDDDMIFDLGPDSTAELAEILKNAKTILWNGPVGVFEFKNFEAGTKGISEAIAASEGFSVAGGGDTLAAIDKFGIKADVSYISTGGGAFLEFVEGKVLPAVEMLEARAK</sequence>
<gene>
    <name evidence="1" type="primary">pgk</name>
    <name type="ordered locus">VIBHAR_03565</name>
</gene>
<accession>A7MTQ1</accession>
<organism>
    <name type="scientific">Vibrio campbellii (strain ATCC BAA-1116)</name>
    <dbReference type="NCBI Taxonomy" id="2902295"/>
    <lineage>
        <taxon>Bacteria</taxon>
        <taxon>Pseudomonadati</taxon>
        <taxon>Pseudomonadota</taxon>
        <taxon>Gammaproteobacteria</taxon>
        <taxon>Vibrionales</taxon>
        <taxon>Vibrionaceae</taxon>
        <taxon>Vibrio</taxon>
    </lineage>
</organism>
<dbReference type="EC" id="2.7.2.3" evidence="1"/>
<dbReference type="EMBL" id="CP000789">
    <property type="protein sequence ID" value="ABU72500.1"/>
    <property type="molecule type" value="Genomic_DNA"/>
</dbReference>
<dbReference type="RefSeq" id="WP_005436484.1">
    <property type="nucleotide sequence ID" value="NC_022269.1"/>
</dbReference>
<dbReference type="SMR" id="A7MTQ1"/>
<dbReference type="KEGG" id="vha:VIBHAR_03565"/>
<dbReference type="PATRIC" id="fig|338187.25.peg.2646"/>
<dbReference type="UniPathway" id="UPA00109">
    <property type="reaction ID" value="UER00185"/>
</dbReference>
<dbReference type="Proteomes" id="UP000008152">
    <property type="component" value="Chromosome I"/>
</dbReference>
<dbReference type="GO" id="GO:0005829">
    <property type="term" value="C:cytosol"/>
    <property type="evidence" value="ECO:0007669"/>
    <property type="project" value="TreeGrafter"/>
</dbReference>
<dbReference type="GO" id="GO:0043531">
    <property type="term" value="F:ADP binding"/>
    <property type="evidence" value="ECO:0007669"/>
    <property type="project" value="TreeGrafter"/>
</dbReference>
<dbReference type="GO" id="GO:0005524">
    <property type="term" value="F:ATP binding"/>
    <property type="evidence" value="ECO:0007669"/>
    <property type="project" value="UniProtKB-KW"/>
</dbReference>
<dbReference type="GO" id="GO:0004618">
    <property type="term" value="F:phosphoglycerate kinase activity"/>
    <property type="evidence" value="ECO:0007669"/>
    <property type="project" value="UniProtKB-UniRule"/>
</dbReference>
<dbReference type="GO" id="GO:0006094">
    <property type="term" value="P:gluconeogenesis"/>
    <property type="evidence" value="ECO:0007669"/>
    <property type="project" value="TreeGrafter"/>
</dbReference>
<dbReference type="GO" id="GO:0006096">
    <property type="term" value="P:glycolytic process"/>
    <property type="evidence" value="ECO:0007669"/>
    <property type="project" value="UniProtKB-UniRule"/>
</dbReference>
<dbReference type="FunFam" id="3.40.50.1260:FF:000001">
    <property type="entry name" value="Phosphoglycerate kinase"/>
    <property type="match status" value="1"/>
</dbReference>
<dbReference type="FunFam" id="3.40.50.1260:FF:000002">
    <property type="entry name" value="Phosphoglycerate kinase"/>
    <property type="match status" value="1"/>
</dbReference>
<dbReference type="Gene3D" id="3.40.50.1260">
    <property type="entry name" value="Phosphoglycerate kinase, N-terminal domain"/>
    <property type="match status" value="2"/>
</dbReference>
<dbReference type="HAMAP" id="MF_00145">
    <property type="entry name" value="Phosphoglyc_kinase"/>
    <property type="match status" value="1"/>
</dbReference>
<dbReference type="InterPro" id="IPR001576">
    <property type="entry name" value="Phosphoglycerate_kinase"/>
</dbReference>
<dbReference type="InterPro" id="IPR015911">
    <property type="entry name" value="Phosphoglycerate_kinase_CS"/>
</dbReference>
<dbReference type="InterPro" id="IPR015824">
    <property type="entry name" value="Phosphoglycerate_kinase_N"/>
</dbReference>
<dbReference type="InterPro" id="IPR036043">
    <property type="entry name" value="Phosphoglycerate_kinase_sf"/>
</dbReference>
<dbReference type="PANTHER" id="PTHR11406">
    <property type="entry name" value="PHOSPHOGLYCERATE KINASE"/>
    <property type="match status" value="1"/>
</dbReference>
<dbReference type="PANTHER" id="PTHR11406:SF23">
    <property type="entry name" value="PHOSPHOGLYCERATE KINASE 1, CHLOROPLASTIC-RELATED"/>
    <property type="match status" value="1"/>
</dbReference>
<dbReference type="Pfam" id="PF00162">
    <property type="entry name" value="PGK"/>
    <property type="match status" value="1"/>
</dbReference>
<dbReference type="PIRSF" id="PIRSF000724">
    <property type="entry name" value="Pgk"/>
    <property type="match status" value="1"/>
</dbReference>
<dbReference type="PRINTS" id="PR00477">
    <property type="entry name" value="PHGLYCKINASE"/>
</dbReference>
<dbReference type="SUPFAM" id="SSF53748">
    <property type="entry name" value="Phosphoglycerate kinase"/>
    <property type="match status" value="1"/>
</dbReference>
<dbReference type="PROSITE" id="PS00111">
    <property type="entry name" value="PGLYCERATE_KINASE"/>
    <property type="match status" value="1"/>
</dbReference>
<feature type="chain" id="PRO_1000058090" description="Phosphoglycerate kinase">
    <location>
        <begin position="1"/>
        <end position="386"/>
    </location>
</feature>
<feature type="binding site" evidence="1">
    <location>
        <begin position="21"/>
        <end position="23"/>
    </location>
    <ligand>
        <name>substrate</name>
    </ligand>
</feature>
<feature type="binding site" evidence="1">
    <location>
        <position position="36"/>
    </location>
    <ligand>
        <name>substrate</name>
    </ligand>
</feature>
<feature type="binding site" evidence="1">
    <location>
        <begin position="59"/>
        <end position="62"/>
    </location>
    <ligand>
        <name>substrate</name>
    </ligand>
</feature>
<feature type="binding site" evidence="1">
    <location>
        <position position="113"/>
    </location>
    <ligand>
        <name>substrate</name>
    </ligand>
</feature>
<feature type="binding site" evidence="1">
    <location>
        <position position="146"/>
    </location>
    <ligand>
        <name>substrate</name>
    </ligand>
</feature>
<feature type="binding site" evidence="1">
    <location>
        <position position="197"/>
    </location>
    <ligand>
        <name>ATP</name>
        <dbReference type="ChEBI" id="CHEBI:30616"/>
    </ligand>
</feature>
<feature type="binding site" evidence="1">
    <location>
        <position position="314"/>
    </location>
    <ligand>
        <name>ATP</name>
        <dbReference type="ChEBI" id="CHEBI:30616"/>
    </ligand>
</feature>
<feature type="binding site" evidence="1">
    <location>
        <begin position="340"/>
        <end position="343"/>
    </location>
    <ligand>
        <name>ATP</name>
        <dbReference type="ChEBI" id="CHEBI:30616"/>
    </ligand>
</feature>
<protein>
    <recommendedName>
        <fullName evidence="1">Phosphoglycerate kinase</fullName>
        <ecNumber evidence="1">2.7.2.3</ecNumber>
    </recommendedName>
</protein>
<proteinExistence type="inferred from homology"/>
<name>PGK_VIBC1</name>